<dbReference type="EC" id="3.4.22.-"/>
<dbReference type="EMBL" id="AY522918">
    <property type="protein sequence ID" value="AAT01901.1"/>
    <property type="molecule type" value="mRNA"/>
</dbReference>
<dbReference type="EMBL" id="AK043171">
    <property type="protein sequence ID" value="BAC31483.1"/>
    <property type="molecule type" value="mRNA"/>
</dbReference>
<dbReference type="EMBL" id="BC067014">
    <property type="protein sequence ID" value="AAH67014.1"/>
    <property type="molecule type" value="mRNA"/>
</dbReference>
<dbReference type="EMBL" id="BC080830">
    <property type="protein sequence ID" value="AAH80830.1"/>
    <property type="molecule type" value="mRNA"/>
</dbReference>
<dbReference type="CCDS" id="CCDS28111.1"/>
<dbReference type="RefSeq" id="NP_001344016.1">
    <property type="nucleotide sequence ID" value="NM_001357087.1"/>
</dbReference>
<dbReference type="RefSeq" id="NP_796077.2">
    <property type="nucleotide sequence ID" value="NM_177103.4"/>
</dbReference>
<dbReference type="RefSeq" id="XP_006522301.1">
    <property type="nucleotide sequence ID" value="XM_006522238.3"/>
</dbReference>
<dbReference type="RefSeq" id="XP_006522302.1">
    <property type="nucleotide sequence ID" value="XM_006522239.3"/>
</dbReference>
<dbReference type="RefSeq" id="XP_011244235.1">
    <property type="nucleotide sequence ID" value="XM_011245933.2"/>
</dbReference>
<dbReference type="RefSeq" id="XP_036015874.1">
    <property type="nucleotide sequence ID" value="XM_036159981.1"/>
</dbReference>
<dbReference type="RefSeq" id="XP_036015875.1">
    <property type="nucleotide sequence ID" value="XM_036159982.1"/>
</dbReference>
<dbReference type="RefSeq" id="XP_036015876.1">
    <property type="nucleotide sequence ID" value="XM_036159983.1"/>
</dbReference>
<dbReference type="SMR" id="Q6NXL6"/>
<dbReference type="FunCoup" id="Q6NXL6">
    <property type="interactions" value="2850"/>
</dbReference>
<dbReference type="STRING" id="10090.ENSMUSP00000156109"/>
<dbReference type="iPTMnet" id="Q6NXL6"/>
<dbReference type="PhosphoSitePlus" id="Q6NXL6"/>
<dbReference type="PaxDb" id="10090-ENSMUSP00000023457"/>
<dbReference type="ProteomicsDB" id="261319"/>
<dbReference type="Antibodypedia" id="33951">
    <property type="antibodies" value="325 antibodies from 31 providers"/>
</dbReference>
<dbReference type="DNASU" id="320213"/>
<dbReference type="Ensembl" id="ENSMUST00000023457.13">
    <property type="protein sequence ID" value="ENSMUSP00000023457.6"/>
    <property type="gene ID" value="ENSMUSG00000022772.13"/>
</dbReference>
<dbReference type="Ensembl" id="ENSMUST00000231360.2">
    <property type="protein sequence ID" value="ENSMUSP00000156109.2"/>
    <property type="gene ID" value="ENSMUSG00000022772.13"/>
</dbReference>
<dbReference type="GeneID" id="320213"/>
<dbReference type="KEGG" id="mmu:320213"/>
<dbReference type="UCSC" id="uc007yya.2">
    <property type="organism name" value="mouse"/>
</dbReference>
<dbReference type="AGR" id="MGI:2443596"/>
<dbReference type="CTD" id="205564"/>
<dbReference type="MGI" id="MGI:2443596">
    <property type="gene designation" value="Senp5"/>
</dbReference>
<dbReference type="VEuPathDB" id="HostDB:ENSMUSG00000022772"/>
<dbReference type="eggNOG" id="KOG0778">
    <property type="taxonomic scope" value="Eukaryota"/>
</dbReference>
<dbReference type="GeneTree" id="ENSGT00940000159865"/>
<dbReference type="HOGENOM" id="CLU_021414_1_0_1"/>
<dbReference type="InParanoid" id="Q6NXL6"/>
<dbReference type="OMA" id="IFISVME"/>
<dbReference type="OrthoDB" id="1939479at2759"/>
<dbReference type="PhylomeDB" id="Q6NXL6"/>
<dbReference type="TreeFam" id="TF316289"/>
<dbReference type="BRENDA" id="3.4.22.B73">
    <property type="organism ID" value="3474"/>
</dbReference>
<dbReference type="Reactome" id="R-MMU-3065679">
    <property type="pathway name" value="SUMO is proteolytically processed"/>
</dbReference>
<dbReference type="BioGRID-ORCS" id="320213">
    <property type="hits" value="1 hit in 76 CRISPR screens"/>
</dbReference>
<dbReference type="ChiTaRS" id="Senp5">
    <property type="organism name" value="mouse"/>
</dbReference>
<dbReference type="PRO" id="PR:Q6NXL6"/>
<dbReference type="Proteomes" id="UP000000589">
    <property type="component" value="Chromosome 16"/>
</dbReference>
<dbReference type="RNAct" id="Q6NXL6">
    <property type="molecule type" value="protein"/>
</dbReference>
<dbReference type="Bgee" id="ENSMUSG00000022772">
    <property type="expression patterns" value="Expressed in humerus cartilage element and 228 other cell types or tissues"/>
</dbReference>
<dbReference type="ExpressionAtlas" id="Q6NXL6">
    <property type="expression patterns" value="baseline and differential"/>
</dbReference>
<dbReference type="GO" id="GO:0005730">
    <property type="term" value="C:nucleolus"/>
    <property type="evidence" value="ECO:0007669"/>
    <property type="project" value="UniProtKB-SubCell"/>
</dbReference>
<dbReference type="GO" id="GO:0099524">
    <property type="term" value="C:postsynaptic cytosol"/>
    <property type="evidence" value="ECO:0000314"/>
    <property type="project" value="SynGO"/>
</dbReference>
<dbReference type="GO" id="GO:0099523">
    <property type="term" value="C:presynaptic cytosol"/>
    <property type="evidence" value="ECO:0000314"/>
    <property type="project" value="SynGO"/>
</dbReference>
<dbReference type="GO" id="GO:0008234">
    <property type="term" value="F:cysteine-type peptidase activity"/>
    <property type="evidence" value="ECO:0007669"/>
    <property type="project" value="UniProtKB-KW"/>
</dbReference>
<dbReference type="GO" id="GO:0051301">
    <property type="term" value="P:cell division"/>
    <property type="evidence" value="ECO:0007669"/>
    <property type="project" value="UniProtKB-KW"/>
</dbReference>
<dbReference type="GO" id="GO:0006508">
    <property type="term" value="P:proteolysis"/>
    <property type="evidence" value="ECO:0007669"/>
    <property type="project" value="UniProtKB-KW"/>
</dbReference>
<dbReference type="FunFam" id="3.40.395.10:FF:000002">
    <property type="entry name" value="Putative sentrin-specific protease 5"/>
    <property type="match status" value="1"/>
</dbReference>
<dbReference type="Gene3D" id="3.40.395.10">
    <property type="entry name" value="Adenoviral Proteinase, Chain A"/>
    <property type="match status" value="1"/>
</dbReference>
<dbReference type="InterPro" id="IPR038765">
    <property type="entry name" value="Papain-like_cys_pep_sf"/>
</dbReference>
<dbReference type="InterPro" id="IPR003653">
    <property type="entry name" value="Peptidase_C48_C"/>
</dbReference>
<dbReference type="InterPro" id="IPR045577">
    <property type="entry name" value="SENP3_5_cons_dom"/>
</dbReference>
<dbReference type="PANTHER" id="PTHR12606:SF10">
    <property type="entry name" value="SENTRIN-SPECIFIC PROTEASE 5"/>
    <property type="match status" value="1"/>
</dbReference>
<dbReference type="PANTHER" id="PTHR12606">
    <property type="entry name" value="SENTRIN/SUMO-SPECIFIC PROTEASE"/>
    <property type="match status" value="1"/>
</dbReference>
<dbReference type="Pfam" id="PF02902">
    <property type="entry name" value="Peptidase_C48"/>
    <property type="match status" value="1"/>
</dbReference>
<dbReference type="Pfam" id="PF19722">
    <property type="entry name" value="SENP3_5_N"/>
    <property type="match status" value="1"/>
</dbReference>
<dbReference type="SUPFAM" id="SSF54001">
    <property type="entry name" value="Cysteine proteinases"/>
    <property type="match status" value="1"/>
</dbReference>
<dbReference type="PROSITE" id="PS50600">
    <property type="entry name" value="ULP_PROTEASE"/>
    <property type="match status" value="1"/>
</dbReference>
<accession>Q6NXL6</accession>
<accession>Q3ZTK4</accession>
<accession>Q8BXW0</accession>
<protein>
    <recommendedName>
        <fullName>Sentrin-specific protease 5</fullName>
        <ecNumber>3.4.22.-</ecNumber>
    </recommendedName>
    <alternativeName>
        <fullName>SUMO/Smt3-specific isopeptidase 3</fullName>
        <shortName>Smt3ip3</shortName>
    </alternativeName>
    <alternativeName>
        <fullName>Sentrin/SUMO-specific protease SENP5</fullName>
    </alternativeName>
</protein>
<gene>
    <name type="primary">Senp5</name>
    <name type="synonym">Smt3ip3</name>
</gene>
<organism>
    <name type="scientific">Mus musculus</name>
    <name type="common">Mouse</name>
    <dbReference type="NCBI Taxonomy" id="10090"/>
    <lineage>
        <taxon>Eukaryota</taxon>
        <taxon>Metazoa</taxon>
        <taxon>Chordata</taxon>
        <taxon>Craniata</taxon>
        <taxon>Vertebrata</taxon>
        <taxon>Euteleostomi</taxon>
        <taxon>Mammalia</taxon>
        <taxon>Eutheria</taxon>
        <taxon>Euarchontoglires</taxon>
        <taxon>Glires</taxon>
        <taxon>Rodentia</taxon>
        <taxon>Myomorpha</taxon>
        <taxon>Muroidea</taxon>
        <taxon>Muridae</taxon>
        <taxon>Murinae</taxon>
        <taxon>Mus</taxon>
        <taxon>Mus</taxon>
    </lineage>
</organism>
<keyword id="KW-0131">Cell cycle</keyword>
<keyword id="KW-0132">Cell division</keyword>
<keyword id="KW-0378">Hydrolase</keyword>
<keyword id="KW-0539">Nucleus</keyword>
<keyword id="KW-0645">Protease</keyword>
<keyword id="KW-1185">Reference proteome</keyword>
<keyword id="KW-0788">Thiol protease</keyword>
<keyword id="KW-0833">Ubl conjugation pathway</keyword>
<feature type="chain" id="PRO_0000267607" description="Sentrin-specific protease 5">
    <location>
        <begin position="1"/>
        <end position="749"/>
    </location>
</feature>
<feature type="region of interest" description="Disordered" evidence="3">
    <location>
        <begin position="268"/>
        <end position="288"/>
    </location>
</feature>
<feature type="region of interest" description="Disordered" evidence="3">
    <location>
        <begin position="394"/>
        <end position="440"/>
    </location>
</feature>
<feature type="region of interest" description="Protease">
    <location>
        <begin position="557"/>
        <end position="718"/>
    </location>
</feature>
<feature type="compositionally biased region" description="Basic and acidic residues" evidence="3">
    <location>
        <begin position="268"/>
        <end position="279"/>
    </location>
</feature>
<feature type="active site" evidence="1">
    <location>
        <position position="640"/>
    </location>
</feature>
<feature type="active site" evidence="1">
    <location>
        <position position="657"/>
    </location>
</feature>
<feature type="active site" evidence="1">
    <location>
        <position position="707"/>
    </location>
</feature>
<feature type="sequence conflict" description="In Ref. 2; BAC31483." evidence="4" ref="2">
    <original>H</original>
    <variation>P</variation>
    <location>
        <position position="51"/>
    </location>
</feature>
<feature type="sequence conflict" description="In Ref. 1; AAT01901." evidence="4" ref="1">
    <original>V</original>
    <variation>A</variation>
    <location>
        <position position="288"/>
    </location>
</feature>
<feature type="sequence conflict" description="In Ref. 1; AAT01901." evidence="4" ref="1">
    <original>H</original>
    <variation>R</variation>
    <location>
        <position position="323"/>
    </location>
</feature>
<proteinExistence type="evidence at transcript level"/>
<name>SENP5_MOUSE</name>
<comment type="function">
    <text evidence="2">Protease that catalyzes two essential functions in the SUMO pathway: processing of full-length SUMO3 to its mature form and deconjugation of SUMO2 and SUMO3 from targeted proteins. Has weak proteolytic activity against full-length SUMO1 or SUMO1 conjugates. Required for cell division.</text>
</comment>
<comment type="subunit">
    <text evidence="2">Interacts with CCAR2.</text>
</comment>
<comment type="subcellular location">
    <subcellularLocation>
        <location evidence="1">Nucleus</location>
        <location evidence="1">Nucleolus</location>
    </subcellularLocation>
</comment>
<comment type="similarity">
    <text evidence="4">Belongs to the peptidase C48 family.</text>
</comment>
<sequence length="749" mass="86100">MKKQKKILWKKGIHLAFSEKWNAGFGSFKKFYFPQNLCFLKAKLGRPVAWHRQVKHFQCNKGLHIQKTWIQDVPFCSKTKSGLATQNVSTLYPKVKRKDSKHFISSSRSLLKLQADKLLSSAKSLDHKYCREKSLLKAAPGLSANTVLGRANGHEPTTDPQASDFPMKFSGESQSPGDSGKTVVLNKHRKRVCHGCYQGLEHHRNRRPLIPKQFQLNQHRRVRASLMMYEKLSMIRFRYRIFRSQHFRTKSRVCKLRKAQRSWVQKVTGDHQENLRDNNTEGDNCNPVPSLEPKDPCRCQPYFPDMDSSAVGKGKNCHVPDGHTKENPVLDKEHGLDDTFPDQQNGCVAYNWDQSSSCPKWECTEQIHEIPLMEHPSSDKFSPETERALMALGQESGTSAVSDDREKLPVSGADKSVSSVDGPVSEEPAQNENFQMEEDGSLKQSILSSKLLDHPYCKSPLDAPLLCSEPKVENQMSGGKSSQTASPVDDEQLSTCLSGFLDEVMKKYGSLVPLSEKDVLGRLKDVFNEDFSNRKPFINREITNYRARHQKCNFRIFYNKHMLDMDDLATLDGQNWLNDQVINMYGELIMDAVPDKVHFFNSFFHRQLVTKGYNGVKRWTKKVDLFKKSLLLIPIHLEVHWSLITVTLSSRIISFYDSQGIHFKFCVENIRKYLLTEAREKNRPEFLQGWQTAVTKCIPQQKNDSDCGVFVLQYCKCLALEQPFQFSQEDMPRVRKRIYKELCECRLLD</sequence>
<reference key="1">
    <citation type="submission" date="2004-01" db="EMBL/GenBank/DDBJ databases">
        <title>SMT3IP3, a novel SUMO/Smt3-specific protease that specifically removes SUMO-2/3 from conjugated proteins.</title>
        <authorList>
            <person name="Nishida T."/>
            <person name="Miwa T."/>
            <person name="Yasuda H."/>
        </authorList>
    </citation>
    <scope>NUCLEOTIDE SEQUENCE [MRNA]</scope>
    <source>
        <strain>BALB/cJ</strain>
    </source>
</reference>
<reference key="2">
    <citation type="journal article" date="2005" name="Science">
        <title>The transcriptional landscape of the mammalian genome.</title>
        <authorList>
            <person name="Carninci P."/>
            <person name="Kasukawa T."/>
            <person name="Katayama S."/>
            <person name="Gough J."/>
            <person name="Frith M.C."/>
            <person name="Maeda N."/>
            <person name="Oyama R."/>
            <person name="Ravasi T."/>
            <person name="Lenhard B."/>
            <person name="Wells C."/>
            <person name="Kodzius R."/>
            <person name="Shimokawa K."/>
            <person name="Bajic V.B."/>
            <person name="Brenner S.E."/>
            <person name="Batalov S."/>
            <person name="Forrest A.R."/>
            <person name="Zavolan M."/>
            <person name="Davis M.J."/>
            <person name="Wilming L.G."/>
            <person name="Aidinis V."/>
            <person name="Allen J.E."/>
            <person name="Ambesi-Impiombato A."/>
            <person name="Apweiler R."/>
            <person name="Aturaliya R.N."/>
            <person name="Bailey T.L."/>
            <person name="Bansal M."/>
            <person name="Baxter L."/>
            <person name="Beisel K.W."/>
            <person name="Bersano T."/>
            <person name="Bono H."/>
            <person name="Chalk A.M."/>
            <person name="Chiu K.P."/>
            <person name="Choudhary V."/>
            <person name="Christoffels A."/>
            <person name="Clutterbuck D.R."/>
            <person name="Crowe M.L."/>
            <person name="Dalla E."/>
            <person name="Dalrymple B.P."/>
            <person name="de Bono B."/>
            <person name="Della Gatta G."/>
            <person name="di Bernardo D."/>
            <person name="Down T."/>
            <person name="Engstrom P."/>
            <person name="Fagiolini M."/>
            <person name="Faulkner G."/>
            <person name="Fletcher C.F."/>
            <person name="Fukushima T."/>
            <person name="Furuno M."/>
            <person name="Futaki S."/>
            <person name="Gariboldi M."/>
            <person name="Georgii-Hemming P."/>
            <person name="Gingeras T.R."/>
            <person name="Gojobori T."/>
            <person name="Green R.E."/>
            <person name="Gustincich S."/>
            <person name="Harbers M."/>
            <person name="Hayashi Y."/>
            <person name="Hensch T.K."/>
            <person name="Hirokawa N."/>
            <person name="Hill D."/>
            <person name="Huminiecki L."/>
            <person name="Iacono M."/>
            <person name="Ikeo K."/>
            <person name="Iwama A."/>
            <person name="Ishikawa T."/>
            <person name="Jakt M."/>
            <person name="Kanapin A."/>
            <person name="Katoh M."/>
            <person name="Kawasawa Y."/>
            <person name="Kelso J."/>
            <person name="Kitamura H."/>
            <person name="Kitano H."/>
            <person name="Kollias G."/>
            <person name="Krishnan S.P."/>
            <person name="Kruger A."/>
            <person name="Kummerfeld S.K."/>
            <person name="Kurochkin I.V."/>
            <person name="Lareau L.F."/>
            <person name="Lazarevic D."/>
            <person name="Lipovich L."/>
            <person name="Liu J."/>
            <person name="Liuni S."/>
            <person name="McWilliam S."/>
            <person name="Madan Babu M."/>
            <person name="Madera M."/>
            <person name="Marchionni L."/>
            <person name="Matsuda H."/>
            <person name="Matsuzawa S."/>
            <person name="Miki H."/>
            <person name="Mignone F."/>
            <person name="Miyake S."/>
            <person name="Morris K."/>
            <person name="Mottagui-Tabar S."/>
            <person name="Mulder N."/>
            <person name="Nakano N."/>
            <person name="Nakauchi H."/>
            <person name="Ng P."/>
            <person name="Nilsson R."/>
            <person name="Nishiguchi S."/>
            <person name="Nishikawa S."/>
            <person name="Nori F."/>
            <person name="Ohara O."/>
            <person name="Okazaki Y."/>
            <person name="Orlando V."/>
            <person name="Pang K.C."/>
            <person name="Pavan W.J."/>
            <person name="Pavesi G."/>
            <person name="Pesole G."/>
            <person name="Petrovsky N."/>
            <person name="Piazza S."/>
            <person name="Reed J."/>
            <person name="Reid J.F."/>
            <person name="Ring B.Z."/>
            <person name="Ringwald M."/>
            <person name="Rost B."/>
            <person name="Ruan Y."/>
            <person name="Salzberg S.L."/>
            <person name="Sandelin A."/>
            <person name="Schneider C."/>
            <person name="Schoenbach C."/>
            <person name="Sekiguchi K."/>
            <person name="Semple C.A."/>
            <person name="Seno S."/>
            <person name="Sessa L."/>
            <person name="Sheng Y."/>
            <person name="Shibata Y."/>
            <person name="Shimada H."/>
            <person name="Shimada K."/>
            <person name="Silva D."/>
            <person name="Sinclair B."/>
            <person name="Sperling S."/>
            <person name="Stupka E."/>
            <person name="Sugiura K."/>
            <person name="Sultana R."/>
            <person name="Takenaka Y."/>
            <person name="Taki K."/>
            <person name="Tammoja K."/>
            <person name="Tan S.L."/>
            <person name="Tang S."/>
            <person name="Taylor M.S."/>
            <person name="Tegner J."/>
            <person name="Teichmann S.A."/>
            <person name="Ueda H.R."/>
            <person name="van Nimwegen E."/>
            <person name="Verardo R."/>
            <person name="Wei C.L."/>
            <person name="Yagi K."/>
            <person name="Yamanishi H."/>
            <person name="Zabarovsky E."/>
            <person name="Zhu S."/>
            <person name="Zimmer A."/>
            <person name="Hide W."/>
            <person name="Bult C."/>
            <person name="Grimmond S.M."/>
            <person name="Teasdale R.D."/>
            <person name="Liu E.T."/>
            <person name="Brusic V."/>
            <person name="Quackenbush J."/>
            <person name="Wahlestedt C."/>
            <person name="Mattick J.S."/>
            <person name="Hume D.A."/>
            <person name="Kai C."/>
            <person name="Sasaki D."/>
            <person name="Tomaru Y."/>
            <person name="Fukuda S."/>
            <person name="Kanamori-Katayama M."/>
            <person name="Suzuki M."/>
            <person name="Aoki J."/>
            <person name="Arakawa T."/>
            <person name="Iida J."/>
            <person name="Imamura K."/>
            <person name="Itoh M."/>
            <person name="Kato T."/>
            <person name="Kawaji H."/>
            <person name="Kawagashira N."/>
            <person name="Kawashima T."/>
            <person name="Kojima M."/>
            <person name="Kondo S."/>
            <person name="Konno H."/>
            <person name="Nakano K."/>
            <person name="Ninomiya N."/>
            <person name="Nishio T."/>
            <person name="Okada M."/>
            <person name="Plessy C."/>
            <person name="Shibata K."/>
            <person name="Shiraki T."/>
            <person name="Suzuki S."/>
            <person name="Tagami M."/>
            <person name="Waki K."/>
            <person name="Watahiki A."/>
            <person name="Okamura-Oho Y."/>
            <person name="Suzuki H."/>
            <person name="Kawai J."/>
            <person name="Hayashizaki Y."/>
        </authorList>
    </citation>
    <scope>NUCLEOTIDE SEQUENCE [LARGE SCALE MRNA]</scope>
    <source>
        <strain>C57BL/6J</strain>
        <tissue>Cerebellum</tissue>
    </source>
</reference>
<reference key="3">
    <citation type="journal article" date="2004" name="Genome Res.">
        <title>The status, quality, and expansion of the NIH full-length cDNA project: the Mammalian Gene Collection (MGC).</title>
        <authorList>
            <consortium name="The MGC Project Team"/>
        </authorList>
    </citation>
    <scope>NUCLEOTIDE SEQUENCE [LARGE SCALE MRNA]</scope>
    <source>
        <strain>C57BL/6J</strain>
        <tissue>Brain</tissue>
        <tissue>Embryo</tissue>
    </source>
</reference>
<evidence type="ECO:0000250" key="1"/>
<evidence type="ECO:0000250" key="2">
    <source>
        <dbReference type="UniProtKB" id="Q96HI0"/>
    </source>
</evidence>
<evidence type="ECO:0000256" key="3">
    <source>
        <dbReference type="SAM" id="MobiDB-lite"/>
    </source>
</evidence>
<evidence type="ECO:0000305" key="4"/>